<organism>
    <name type="scientific">Leptospira borgpetersenii serovar Hardjo-bovis (strain JB197)</name>
    <dbReference type="NCBI Taxonomy" id="355277"/>
    <lineage>
        <taxon>Bacteria</taxon>
        <taxon>Pseudomonadati</taxon>
        <taxon>Spirochaetota</taxon>
        <taxon>Spirochaetia</taxon>
        <taxon>Leptospirales</taxon>
        <taxon>Leptospiraceae</taxon>
        <taxon>Leptospira</taxon>
    </lineage>
</organism>
<protein>
    <recommendedName>
        <fullName evidence="1">Large ribosomal subunit protein uL11</fullName>
    </recommendedName>
    <alternativeName>
        <fullName evidence="2">50S ribosomal protein L11</fullName>
    </alternativeName>
</protein>
<comment type="function">
    <text evidence="1">Forms part of the ribosomal stalk which helps the ribosome interact with GTP-bound translation factors.</text>
</comment>
<comment type="subunit">
    <text evidence="1">Part of the ribosomal stalk of the 50S ribosomal subunit. Interacts with L10 and the large rRNA to form the base of the stalk. L10 forms an elongated spine to which L12 dimers bind in a sequential fashion forming a multimeric L10(L12)X complex.</text>
</comment>
<comment type="PTM">
    <text evidence="1">One or more lysine residues are methylated.</text>
</comment>
<comment type="similarity">
    <text evidence="1">Belongs to the universal ribosomal protein uL11 family.</text>
</comment>
<keyword id="KW-0488">Methylation</keyword>
<keyword id="KW-0687">Ribonucleoprotein</keyword>
<keyword id="KW-0689">Ribosomal protein</keyword>
<keyword id="KW-0694">RNA-binding</keyword>
<keyword id="KW-0699">rRNA-binding</keyword>
<proteinExistence type="inferred from homology"/>
<evidence type="ECO:0000255" key="1">
    <source>
        <dbReference type="HAMAP-Rule" id="MF_00736"/>
    </source>
</evidence>
<evidence type="ECO:0000305" key="2"/>
<dbReference type="EMBL" id="CP000350">
    <property type="protein sequence ID" value="ABJ76835.1"/>
    <property type="molecule type" value="Genomic_DNA"/>
</dbReference>
<dbReference type="RefSeq" id="WP_002626022.1">
    <property type="nucleotide sequence ID" value="NC_008510.1"/>
</dbReference>
<dbReference type="SMR" id="Q04QI5"/>
<dbReference type="GeneID" id="61111525"/>
<dbReference type="KEGG" id="lbj:LBJ_2369"/>
<dbReference type="HOGENOM" id="CLU_074237_2_0_12"/>
<dbReference type="Proteomes" id="UP000000656">
    <property type="component" value="Chromosome 1"/>
</dbReference>
<dbReference type="GO" id="GO:0022625">
    <property type="term" value="C:cytosolic large ribosomal subunit"/>
    <property type="evidence" value="ECO:0007669"/>
    <property type="project" value="TreeGrafter"/>
</dbReference>
<dbReference type="GO" id="GO:0070180">
    <property type="term" value="F:large ribosomal subunit rRNA binding"/>
    <property type="evidence" value="ECO:0007669"/>
    <property type="project" value="UniProtKB-UniRule"/>
</dbReference>
<dbReference type="GO" id="GO:0003735">
    <property type="term" value="F:structural constituent of ribosome"/>
    <property type="evidence" value="ECO:0007669"/>
    <property type="project" value="InterPro"/>
</dbReference>
<dbReference type="GO" id="GO:0006412">
    <property type="term" value="P:translation"/>
    <property type="evidence" value="ECO:0007669"/>
    <property type="project" value="UniProtKB-UniRule"/>
</dbReference>
<dbReference type="CDD" id="cd00349">
    <property type="entry name" value="Ribosomal_L11"/>
    <property type="match status" value="1"/>
</dbReference>
<dbReference type="FunFam" id="1.10.10.250:FF:000001">
    <property type="entry name" value="50S ribosomal protein L11"/>
    <property type="match status" value="1"/>
</dbReference>
<dbReference type="FunFam" id="3.30.1550.10:FF:000001">
    <property type="entry name" value="50S ribosomal protein L11"/>
    <property type="match status" value="1"/>
</dbReference>
<dbReference type="Gene3D" id="1.10.10.250">
    <property type="entry name" value="Ribosomal protein L11, C-terminal domain"/>
    <property type="match status" value="1"/>
</dbReference>
<dbReference type="Gene3D" id="3.30.1550.10">
    <property type="entry name" value="Ribosomal protein L11/L12, N-terminal domain"/>
    <property type="match status" value="1"/>
</dbReference>
<dbReference type="HAMAP" id="MF_00736">
    <property type="entry name" value="Ribosomal_uL11"/>
    <property type="match status" value="1"/>
</dbReference>
<dbReference type="InterPro" id="IPR000911">
    <property type="entry name" value="Ribosomal_uL11"/>
</dbReference>
<dbReference type="InterPro" id="IPR006519">
    <property type="entry name" value="Ribosomal_uL11_bac-typ"/>
</dbReference>
<dbReference type="InterPro" id="IPR020783">
    <property type="entry name" value="Ribosomal_uL11_C"/>
</dbReference>
<dbReference type="InterPro" id="IPR036769">
    <property type="entry name" value="Ribosomal_uL11_C_sf"/>
</dbReference>
<dbReference type="InterPro" id="IPR020785">
    <property type="entry name" value="Ribosomal_uL11_CS"/>
</dbReference>
<dbReference type="InterPro" id="IPR020784">
    <property type="entry name" value="Ribosomal_uL11_N"/>
</dbReference>
<dbReference type="InterPro" id="IPR036796">
    <property type="entry name" value="Ribosomal_uL11_N_sf"/>
</dbReference>
<dbReference type="NCBIfam" id="TIGR01632">
    <property type="entry name" value="L11_bact"/>
    <property type="match status" value="1"/>
</dbReference>
<dbReference type="PANTHER" id="PTHR11661">
    <property type="entry name" value="60S RIBOSOMAL PROTEIN L12"/>
    <property type="match status" value="1"/>
</dbReference>
<dbReference type="PANTHER" id="PTHR11661:SF1">
    <property type="entry name" value="LARGE RIBOSOMAL SUBUNIT PROTEIN UL11M"/>
    <property type="match status" value="1"/>
</dbReference>
<dbReference type="Pfam" id="PF00298">
    <property type="entry name" value="Ribosomal_L11"/>
    <property type="match status" value="1"/>
</dbReference>
<dbReference type="Pfam" id="PF03946">
    <property type="entry name" value="Ribosomal_L11_N"/>
    <property type="match status" value="1"/>
</dbReference>
<dbReference type="SMART" id="SM00649">
    <property type="entry name" value="RL11"/>
    <property type="match status" value="1"/>
</dbReference>
<dbReference type="SUPFAM" id="SSF54747">
    <property type="entry name" value="Ribosomal L11/L12e N-terminal domain"/>
    <property type="match status" value="1"/>
</dbReference>
<dbReference type="SUPFAM" id="SSF46906">
    <property type="entry name" value="Ribosomal protein L11, C-terminal domain"/>
    <property type="match status" value="1"/>
</dbReference>
<dbReference type="PROSITE" id="PS00359">
    <property type="entry name" value="RIBOSOMAL_L11"/>
    <property type="match status" value="1"/>
</dbReference>
<sequence length="142" mass="15134">MAAKKVVKQIKLQVEAGKANPAPPVGPALGQAGLNIMEFCKQFNERSKAQIGLKLPVVITVFSDRSFTFITKSPPAALLVKKAIGLETGSPTPHTHKVGKITRKQLEEIAKTKMEDLNANDIDAAVNIIAGTCRSMGVTVEA</sequence>
<reference key="1">
    <citation type="journal article" date="2006" name="Proc. Natl. Acad. Sci. U.S.A.">
        <title>Genome reduction in Leptospira borgpetersenii reflects limited transmission potential.</title>
        <authorList>
            <person name="Bulach D.M."/>
            <person name="Zuerner R.L."/>
            <person name="Wilson P."/>
            <person name="Seemann T."/>
            <person name="McGrath A."/>
            <person name="Cullen P.A."/>
            <person name="Davis J."/>
            <person name="Johnson M."/>
            <person name="Kuczek E."/>
            <person name="Alt D.P."/>
            <person name="Peterson-Burch B."/>
            <person name="Coppel R.L."/>
            <person name="Rood J.I."/>
            <person name="Davies J.K."/>
            <person name="Adler B."/>
        </authorList>
    </citation>
    <scope>NUCLEOTIDE SEQUENCE [LARGE SCALE GENOMIC DNA]</scope>
    <source>
        <strain>JB197</strain>
    </source>
</reference>
<feature type="chain" id="PRO_1000046202" description="Large ribosomal subunit protein uL11">
    <location>
        <begin position="1"/>
        <end position="142"/>
    </location>
</feature>
<accession>Q04QI5</accession>
<name>RL11_LEPBJ</name>
<gene>
    <name evidence="1" type="primary">rplK</name>
    <name type="ordered locus">LBJ_2369</name>
</gene>